<proteinExistence type="inferred from homology"/>
<evidence type="ECO:0000255" key="1">
    <source>
        <dbReference type="HAMAP-Rule" id="MF_01356"/>
    </source>
</evidence>
<accession>B1ZA45</accession>
<keyword id="KW-0004">4Fe-4S</keyword>
<keyword id="KW-0997">Cell inner membrane</keyword>
<keyword id="KW-1003">Cell membrane</keyword>
<keyword id="KW-0408">Iron</keyword>
<keyword id="KW-0411">Iron-sulfur</keyword>
<keyword id="KW-0472">Membrane</keyword>
<keyword id="KW-0479">Metal-binding</keyword>
<keyword id="KW-0520">NAD</keyword>
<keyword id="KW-0874">Quinone</keyword>
<keyword id="KW-1278">Translocase</keyword>
<keyword id="KW-0813">Transport</keyword>
<keyword id="KW-0830">Ubiquinone</keyword>
<reference key="1">
    <citation type="submission" date="2008-04" db="EMBL/GenBank/DDBJ databases">
        <title>Complete sequence of chromosome of Methylobacterium populi BJ001.</title>
        <authorList>
            <consortium name="US DOE Joint Genome Institute"/>
            <person name="Copeland A."/>
            <person name="Lucas S."/>
            <person name="Lapidus A."/>
            <person name="Glavina del Rio T."/>
            <person name="Dalin E."/>
            <person name="Tice H."/>
            <person name="Bruce D."/>
            <person name="Goodwin L."/>
            <person name="Pitluck S."/>
            <person name="Chertkov O."/>
            <person name="Brettin T."/>
            <person name="Detter J.C."/>
            <person name="Han C."/>
            <person name="Kuske C.R."/>
            <person name="Schmutz J."/>
            <person name="Larimer F."/>
            <person name="Land M."/>
            <person name="Hauser L."/>
            <person name="Kyrpides N."/>
            <person name="Mikhailova N."/>
            <person name="Marx C."/>
            <person name="Richardson P."/>
        </authorList>
    </citation>
    <scope>NUCLEOTIDE SEQUENCE [LARGE SCALE GENOMIC DNA]</scope>
    <source>
        <strain>ATCC BAA-705 / NCIMB 13946 / BJ001</strain>
    </source>
</reference>
<comment type="function">
    <text evidence="1">NDH-1 shuttles electrons from NADH, via FMN and iron-sulfur (Fe-S) centers, to quinones in the respiratory chain. The immediate electron acceptor for the enzyme in this species is believed to be ubiquinone. Couples the redox reaction to proton translocation (for every two electrons transferred, four hydrogen ions are translocated across the cytoplasmic membrane), and thus conserves the redox energy in a proton gradient.</text>
</comment>
<comment type="catalytic activity">
    <reaction evidence="1">
        <text>a quinone + NADH + 5 H(+)(in) = a quinol + NAD(+) + 4 H(+)(out)</text>
        <dbReference type="Rhea" id="RHEA:57888"/>
        <dbReference type="ChEBI" id="CHEBI:15378"/>
        <dbReference type="ChEBI" id="CHEBI:24646"/>
        <dbReference type="ChEBI" id="CHEBI:57540"/>
        <dbReference type="ChEBI" id="CHEBI:57945"/>
        <dbReference type="ChEBI" id="CHEBI:132124"/>
    </reaction>
</comment>
<comment type="cofactor">
    <cofactor evidence="1">
        <name>[4Fe-4S] cluster</name>
        <dbReference type="ChEBI" id="CHEBI:49883"/>
    </cofactor>
    <text evidence="1">Binds 1 [4Fe-4S] cluster.</text>
</comment>
<comment type="subunit">
    <text evidence="1">NDH-1 is composed of 14 different subunits. Subunits NuoB, C, D, E, F, and G constitute the peripheral sector of the complex.</text>
</comment>
<comment type="subcellular location">
    <subcellularLocation>
        <location evidence="1">Cell inner membrane</location>
        <topology evidence="1">Peripheral membrane protein</topology>
        <orientation evidence="1">Cytoplasmic side</orientation>
    </subcellularLocation>
</comment>
<comment type="similarity">
    <text evidence="1">Belongs to the complex I 20 kDa subunit family.</text>
</comment>
<organism>
    <name type="scientific">Methylorubrum populi (strain ATCC BAA-705 / NCIMB 13946 / BJ001)</name>
    <name type="common">Methylobacterium populi</name>
    <dbReference type="NCBI Taxonomy" id="441620"/>
    <lineage>
        <taxon>Bacteria</taxon>
        <taxon>Pseudomonadati</taxon>
        <taxon>Pseudomonadota</taxon>
        <taxon>Alphaproteobacteria</taxon>
        <taxon>Hyphomicrobiales</taxon>
        <taxon>Methylobacteriaceae</taxon>
        <taxon>Methylorubrum</taxon>
    </lineage>
</organism>
<sequence>MALTPTFSRAPDIAPAPKGIIDPATGRPIGANDPTFLSISSELADRGFLVTSADELINWARTGSLMWMTFGLACCAVEMMQMSMPRYDCERFGFAPRGSPRQSDVMIVAGTLTNKMAPALRKVYDQMPEPRYVISMGSCANGGGYYHYSYSVVRGCDRVVPVDIYVPGCPPSAEALLYGVLLLQRKIRRTGTIER</sequence>
<name>NUOB_METPB</name>
<feature type="chain" id="PRO_0000376269" description="NADH-quinone oxidoreductase subunit B">
    <location>
        <begin position="1"/>
        <end position="195"/>
    </location>
</feature>
<feature type="binding site" evidence="1">
    <location>
        <position position="74"/>
    </location>
    <ligand>
        <name>[4Fe-4S] cluster</name>
        <dbReference type="ChEBI" id="CHEBI:49883"/>
    </ligand>
</feature>
<feature type="binding site" evidence="1">
    <location>
        <position position="75"/>
    </location>
    <ligand>
        <name>[4Fe-4S] cluster</name>
        <dbReference type="ChEBI" id="CHEBI:49883"/>
    </ligand>
</feature>
<feature type="binding site" evidence="1">
    <location>
        <position position="139"/>
    </location>
    <ligand>
        <name>[4Fe-4S] cluster</name>
        <dbReference type="ChEBI" id="CHEBI:49883"/>
    </ligand>
</feature>
<feature type="binding site" evidence="1">
    <location>
        <position position="169"/>
    </location>
    <ligand>
        <name>[4Fe-4S] cluster</name>
        <dbReference type="ChEBI" id="CHEBI:49883"/>
    </ligand>
</feature>
<protein>
    <recommendedName>
        <fullName evidence="1">NADH-quinone oxidoreductase subunit B</fullName>
        <ecNumber evidence="1">7.1.1.-</ecNumber>
    </recommendedName>
    <alternativeName>
        <fullName evidence="1">NADH dehydrogenase I subunit B</fullName>
    </alternativeName>
    <alternativeName>
        <fullName evidence="1">NDH-1 subunit B</fullName>
    </alternativeName>
</protein>
<dbReference type="EC" id="7.1.1.-" evidence="1"/>
<dbReference type="EMBL" id="CP001029">
    <property type="protein sequence ID" value="ACB79194.1"/>
    <property type="molecule type" value="Genomic_DNA"/>
</dbReference>
<dbReference type="RefSeq" id="WP_012452945.1">
    <property type="nucleotide sequence ID" value="NC_010725.1"/>
</dbReference>
<dbReference type="SMR" id="B1ZA45"/>
<dbReference type="STRING" id="441620.Mpop_1018"/>
<dbReference type="KEGG" id="mpo:Mpop_1018"/>
<dbReference type="eggNOG" id="COG0377">
    <property type="taxonomic scope" value="Bacteria"/>
</dbReference>
<dbReference type="HOGENOM" id="CLU_055737_7_0_5"/>
<dbReference type="OrthoDB" id="9786737at2"/>
<dbReference type="Proteomes" id="UP000007136">
    <property type="component" value="Chromosome"/>
</dbReference>
<dbReference type="GO" id="GO:0005886">
    <property type="term" value="C:plasma membrane"/>
    <property type="evidence" value="ECO:0007669"/>
    <property type="project" value="UniProtKB-SubCell"/>
</dbReference>
<dbReference type="GO" id="GO:0045271">
    <property type="term" value="C:respiratory chain complex I"/>
    <property type="evidence" value="ECO:0007669"/>
    <property type="project" value="TreeGrafter"/>
</dbReference>
<dbReference type="GO" id="GO:0051539">
    <property type="term" value="F:4 iron, 4 sulfur cluster binding"/>
    <property type="evidence" value="ECO:0007669"/>
    <property type="project" value="UniProtKB-KW"/>
</dbReference>
<dbReference type="GO" id="GO:0005506">
    <property type="term" value="F:iron ion binding"/>
    <property type="evidence" value="ECO:0007669"/>
    <property type="project" value="UniProtKB-UniRule"/>
</dbReference>
<dbReference type="GO" id="GO:0008137">
    <property type="term" value="F:NADH dehydrogenase (ubiquinone) activity"/>
    <property type="evidence" value="ECO:0007669"/>
    <property type="project" value="InterPro"/>
</dbReference>
<dbReference type="GO" id="GO:0050136">
    <property type="term" value="F:NADH:ubiquinone reductase (non-electrogenic) activity"/>
    <property type="evidence" value="ECO:0007669"/>
    <property type="project" value="UniProtKB-UniRule"/>
</dbReference>
<dbReference type="GO" id="GO:0048038">
    <property type="term" value="F:quinone binding"/>
    <property type="evidence" value="ECO:0007669"/>
    <property type="project" value="UniProtKB-KW"/>
</dbReference>
<dbReference type="GO" id="GO:0009060">
    <property type="term" value="P:aerobic respiration"/>
    <property type="evidence" value="ECO:0007669"/>
    <property type="project" value="TreeGrafter"/>
</dbReference>
<dbReference type="GO" id="GO:0015990">
    <property type="term" value="P:electron transport coupled proton transport"/>
    <property type="evidence" value="ECO:0007669"/>
    <property type="project" value="TreeGrafter"/>
</dbReference>
<dbReference type="FunFam" id="3.40.50.12280:FF:000001">
    <property type="entry name" value="NADH-quinone oxidoreductase subunit B 2"/>
    <property type="match status" value="1"/>
</dbReference>
<dbReference type="Gene3D" id="3.40.50.12280">
    <property type="match status" value="1"/>
</dbReference>
<dbReference type="HAMAP" id="MF_01356">
    <property type="entry name" value="NDH1_NuoB"/>
    <property type="match status" value="1"/>
</dbReference>
<dbReference type="InterPro" id="IPR006137">
    <property type="entry name" value="NADH_UbQ_OxRdtase-like_20kDa"/>
</dbReference>
<dbReference type="InterPro" id="IPR006138">
    <property type="entry name" value="NADH_UQ_OxRdtase_20Kd_su"/>
</dbReference>
<dbReference type="NCBIfam" id="TIGR01957">
    <property type="entry name" value="nuoB_fam"/>
    <property type="match status" value="1"/>
</dbReference>
<dbReference type="NCBIfam" id="NF005012">
    <property type="entry name" value="PRK06411.1"/>
    <property type="match status" value="1"/>
</dbReference>
<dbReference type="PANTHER" id="PTHR11995">
    <property type="entry name" value="NADH DEHYDROGENASE"/>
    <property type="match status" value="1"/>
</dbReference>
<dbReference type="PANTHER" id="PTHR11995:SF14">
    <property type="entry name" value="NADH DEHYDROGENASE [UBIQUINONE] IRON-SULFUR PROTEIN 7, MITOCHONDRIAL"/>
    <property type="match status" value="1"/>
</dbReference>
<dbReference type="Pfam" id="PF01058">
    <property type="entry name" value="Oxidored_q6"/>
    <property type="match status" value="1"/>
</dbReference>
<dbReference type="SUPFAM" id="SSF56770">
    <property type="entry name" value="HydA/Nqo6-like"/>
    <property type="match status" value="1"/>
</dbReference>
<dbReference type="PROSITE" id="PS01150">
    <property type="entry name" value="COMPLEX1_20K"/>
    <property type="match status" value="1"/>
</dbReference>
<gene>
    <name evidence="1" type="primary">nuoB</name>
    <name type="ordered locus">Mpop_1018</name>
</gene>